<feature type="signal peptide" evidence="1">
    <location>
        <begin position="1"/>
        <end position="24"/>
    </location>
</feature>
<feature type="chain" id="PRO_0000018912" description="Patr class I histocompatibility antigen, A-108 alpha chain">
    <location>
        <begin position="25"/>
        <end position="365"/>
    </location>
</feature>
<feature type="topological domain" description="Extracellular" evidence="4">
    <location>
        <begin position="25"/>
        <end position="308"/>
    </location>
</feature>
<feature type="transmembrane region" description="Helical" evidence="4">
    <location>
        <begin position="309"/>
        <end position="332"/>
    </location>
</feature>
<feature type="topological domain" description="Cytoplasmic" evidence="4">
    <location>
        <begin position="333"/>
        <end position="365"/>
    </location>
</feature>
<feature type="domain" description="Ig-like C1-type">
    <location>
        <begin position="209"/>
        <end position="295"/>
    </location>
</feature>
<feature type="region of interest" description="Alpha-1">
    <location>
        <begin position="25"/>
        <end position="114"/>
    </location>
</feature>
<feature type="region of interest" description="Alpha-2">
    <location>
        <begin position="115"/>
        <end position="206"/>
    </location>
</feature>
<feature type="region of interest" description="Alpha-3">
    <location>
        <begin position="207"/>
        <end position="298"/>
    </location>
</feature>
<feature type="region of interest" description="Connecting peptide">
    <location>
        <begin position="299"/>
        <end position="308"/>
    </location>
</feature>
<feature type="region of interest" description="Disordered" evidence="6">
    <location>
        <begin position="339"/>
        <end position="360"/>
    </location>
</feature>
<feature type="compositionally biased region" description="Low complexity" evidence="6">
    <location>
        <begin position="346"/>
        <end position="359"/>
    </location>
</feature>
<feature type="modified residue" description="Phosphoserine" evidence="3">
    <location>
        <position position="343"/>
    </location>
</feature>
<feature type="modified residue" description="Phosphotyrosine" evidence="3">
    <location>
        <position position="344"/>
    </location>
</feature>
<feature type="modified residue" description="Phosphoserine" evidence="3">
    <location>
        <position position="349"/>
    </location>
</feature>
<feature type="modified residue" description="Phosphoserine" evidence="2">
    <location>
        <position position="350"/>
    </location>
</feature>
<feature type="modified residue" description="Phosphoserine" evidence="2">
    <location>
        <position position="352"/>
    </location>
</feature>
<feature type="modified residue" description="Phosphoserine" evidence="2">
    <location>
        <position position="356"/>
    </location>
</feature>
<feature type="modified residue" description="Phosphoserine" evidence="2">
    <location>
        <position position="359"/>
    </location>
</feature>
<feature type="glycosylation site" description="N-linked (GlcNAc...) asparagine" evidence="1">
    <location>
        <position position="110"/>
    </location>
</feature>
<feature type="disulfide bond" evidence="5">
    <location>
        <begin position="125"/>
        <end position="188"/>
    </location>
</feature>
<feature type="disulfide bond" evidence="5">
    <location>
        <begin position="227"/>
        <end position="283"/>
    </location>
</feature>
<reference key="1">
    <citation type="journal article" date="2002" name="J. Virol.">
        <title>Molecular and immunological significance of chimpanzee major histocompatibility complex haplotypes for hepatitis C virus immune response and vaccination studies.</title>
        <authorList>
            <person name="Mizukoshi E."/>
            <person name="Nascimbeni M."/>
            <person name="Blaustein J.B."/>
            <person name="Mihalik K."/>
            <person name="Rice C.M."/>
            <person name="Liang T.J."/>
            <person name="Feinstone S.M."/>
            <person name="Rehermann B."/>
        </authorList>
    </citation>
    <scope>NUCLEOTIDE SEQUENCE [MRNA]</scope>
</reference>
<reference key="2">
    <citation type="journal article" date="1988" name="EMBO J.">
        <title>Nucleotide sequences of chimpanzee MHC class I alleles: evidence for trans-species mode of evolution.</title>
        <authorList>
            <person name="Mayer W.E."/>
            <person name="Jonker M."/>
            <person name="Klein D."/>
            <person name="Ivanyi P."/>
            <person name="van Seventer G."/>
            <person name="Klein J."/>
        </authorList>
    </citation>
    <scope>NUCLEOTIDE SEQUENCE [MRNA] OF 2-365</scope>
</reference>
<keyword id="KW-1015">Disulfide bond</keyword>
<keyword id="KW-0325">Glycoprotein</keyword>
<keyword id="KW-0391">Immunity</keyword>
<keyword id="KW-0472">Membrane</keyword>
<keyword id="KW-0490">MHC I</keyword>
<keyword id="KW-0597">Phosphoprotein</keyword>
<keyword id="KW-1185">Reference proteome</keyword>
<keyword id="KW-0732">Signal</keyword>
<keyword id="KW-0812">Transmembrane</keyword>
<keyword id="KW-1133">Transmembrane helix</keyword>
<name>1A03_PANTR</name>
<evidence type="ECO:0000250" key="1"/>
<evidence type="ECO:0000250" key="2">
    <source>
        <dbReference type="UniProtKB" id="P04439"/>
    </source>
</evidence>
<evidence type="ECO:0000250" key="3">
    <source>
        <dbReference type="UniProtKB" id="P18462"/>
    </source>
</evidence>
<evidence type="ECO:0000255" key="4"/>
<evidence type="ECO:0000255" key="5">
    <source>
        <dbReference type="PROSITE-ProRule" id="PRU00114"/>
    </source>
</evidence>
<evidence type="ECO:0000256" key="6">
    <source>
        <dbReference type="SAM" id="MobiDB-lite"/>
    </source>
</evidence>
<evidence type="ECO:0000305" key="7"/>
<proteinExistence type="evidence at transcript level"/>
<accession>P13748</accession>
<accession>Q547D5</accession>
<dbReference type="EMBL" id="AF500288">
    <property type="protein sequence ID" value="AAM49754.1"/>
    <property type="molecule type" value="mRNA"/>
</dbReference>
<dbReference type="EMBL" id="X13113">
    <property type="protein sequence ID" value="CAA31505.1"/>
    <property type="molecule type" value="mRNA"/>
</dbReference>
<dbReference type="PIR" id="S03535">
    <property type="entry name" value="S03535"/>
</dbReference>
<dbReference type="RefSeq" id="NP_001009058.3">
    <property type="nucleotide sequence ID" value="NM_001009058.3"/>
</dbReference>
<dbReference type="SMR" id="P13748"/>
<dbReference type="FunCoup" id="P13748">
    <property type="interactions" value="856"/>
</dbReference>
<dbReference type="STRING" id="9598.ENSPTRP00000089515"/>
<dbReference type="GlyCosmos" id="P13748">
    <property type="glycosylation" value="1 site, No reported glycans"/>
</dbReference>
<dbReference type="GeneID" id="750725"/>
<dbReference type="KEGG" id="ptr:750725"/>
<dbReference type="CTD" id="750725"/>
<dbReference type="InParanoid" id="P13748"/>
<dbReference type="Proteomes" id="UP000002277">
    <property type="component" value="Unplaced"/>
</dbReference>
<dbReference type="GO" id="GO:0031901">
    <property type="term" value="C:early endosome membrane"/>
    <property type="evidence" value="ECO:0007669"/>
    <property type="project" value="UniProtKB-ARBA"/>
</dbReference>
<dbReference type="GO" id="GO:0012507">
    <property type="term" value="C:ER to Golgi transport vesicle membrane"/>
    <property type="evidence" value="ECO:0007669"/>
    <property type="project" value="UniProtKB-ARBA"/>
</dbReference>
<dbReference type="GO" id="GO:0009897">
    <property type="term" value="C:external side of plasma membrane"/>
    <property type="evidence" value="ECO:0000318"/>
    <property type="project" value="GO_Central"/>
</dbReference>
<dbReference type="GO" id="GO:0005615">
    <property type="term" value="C:extracellular space"/>
    <property type="evidence" value="ECO:0000318"/>
    <property type="project" value="GO_Central"/>
</dbReference>
<dbReference type="GO" id="GO:0098553">
    <property type="term" value="C:lumenal side of endoplasmic reticulum membrane"/>
    <property type="evidence" value="ECO:0007669"/>
    <property type="project" value="UniProtKB-ARBA"/>
</dbReference>
<dbReference type="GO" id="GO:0042612">
    <property type="term" value="C:MHC class I protein complex"/>
    <property type="evidence" value="ECO:0007669"/>
    <property type="project" value="UniProtKB-KW"/>
</dbReference>
<dbReference type="GO" id="GO:0030670">
    <property type="term" value="C:phagocytic vesicle membrane"/>
    <property type="evidence" value="ECO:0007669"/>
    <property type="project" value="UniProtKB-ARBA"/>
</dbReference>
<dbReference type="GO" id="GO:0055038">
    <property type="term" value="C:recycling endosome membrane"/>
    <property type="evidence" value="ECO:0007669"/>
    <property type="project" value="UniProtKB-ARBA"/>
</dbReference>
<dbReference type="GO" id="GO:0042605">
    <property type="term" value="F:peptide antigen binding"/>
    <property type="evidence" value="ECO:0000318"/>
    <property type="project" value="GO_Central"/>
</dbReference>
<dbReference type="GO" id="GO:0005102">
    <property type="term" value="F:signaling receptor binding"/>
    <property type="evidence" value="ECO:0000318"/>
    <property type="project" value="GO_Central"/>
</dbReference>
<dbReference type="GO" id="GO:0002486">
    <property type="term" value="P:antigen processing and presentation of endogenous peptide antigen via MHC class I via ER pathway, TAP-independent"/>
    <property type="evidence" value="ECO:0000318"/>
    <property type="project" value="GO_Central"/>
</dbReference>
<dbReference type="GO" id="GO:0002476">
    <property type="term" value="P:antigen processing and presentation of endogenous peptide antigen via MHC class Ib"/>
    <property type="evidence" value="ECO:0000318"/>
    <property type="project" value="GO_Central"/>
</dbReference>
<dbReference type="GO" id="GO:0006955">
    <property type="term" value="P:immune response"/>
    <property type="evidence" value="ECO:0000318"/>
    <property type="project" value="GO_Central"/>
</dbReference>
<dbReference type="GO" id="GO:0001916">
    <property type="term" value="P:positive regulation of T cell mediated cytotoxicity"/>
    <property type="evidence" value="ECO:0000318"/>
    <property type="project" value="GO_Central"/>
</dbReference>
<dbReference type="CDD" id="cd21026">
    <property type="entry name" value="IgC1_MHC_Ia_HLA-B"/>
    <property type="match status" value="1"/>
</dbReference>
<dbReference type="FunFam" id="2.60.40.10:FF:000014">
    <property type="entry name" value="H-2 class I histocompatibility antigen, alpha chain"/>
    <property type="match status" value="1"/>
</dbReference>
<dbReference type="FunFam" id="3.30.500.10:FF:000001">
    <property type="entry name" value="H-2 class I histocompatibility antigen, alpha chain"/>
    <property type="match status" value="1"/>
</dbReference>
<dbReference type="Gene3D" id="2.60.40.10">
    <property type="entry name" value="Immunoglobulins"/>
    <property type="match status" value="1"/>
</dbReference>
<dbReference type="Gene3D" id="3.30.500.10">
    <property type="entry name" value="MHC class I-like antigen recognition-like"/>
    <property type="match status" value="1"/>
</dbReference>
<dbReference type="InterPro" id="IPR007110">
    <property type="entry name" value="Ig-like_dom"/>
</dbReference>
<dbReference type="InterPro" id="IPR036179">
    <property type="entry name" value="Ig-like_dom_sf"/>
</dbReference>
<dbReference type="InterPro" id="IPR013783">
    <property type="entry name" value="Ig-like_fold"/>
</dbReference>
<dbReference type="InterPro" id="IPR003006">
    <property type="entry name" value="Ig/MHC_CS"/>
</dbReference>
<dbReference type="InterPro" id="IPR003597">
    <property type="entry name" value="Ig_C1-set"/>
</dbReference>
<dbReference type="InterPro" id="IPR050208">
    <property type="entry name" value="MHC_class-I_related"/>
</dbReference>
<dbReference type="InterPro" id="IPR011161">
    <property type="entry name" value="MHC_I-like_Ag-recog"/>
</dbReference>
<dbReference type="InterPro" id="IPR037055">
    <property type="entry name" value="MHC_I-like_Ag-recog_sf"/>
</dbReference>
<dbReference type="InterPro" id="IPR011162">
    <property type="entry name" value="MHC_I/II-like_Ag-recog"/>
</dbReference>
<dbReference type="InterPro" id="IPR001039">
    <property type="entry name" value="MHC_I_a_a1/a2"/>
</dbReference>
<dbReference type="InterPro" id="IPR010579">
    <property type="entry name" value="MHC_I_a_C"/>
</dbReference>
<dbReference type="PANTHER" id="PTHR16675:SF229">
    <property type="entry name" value="HLA CLASS I HISTOCOMPATIBILITY ANTIGEN, A ALPHA CHAIN"/>
    <property type="match status" value="1"/>
</dbReference>
<dbReference type="PANTHER" id="PTHR16675">
    <property type="entry name" value="MHC CLASS I-RELATED"/>
    <property type="match status" value="1"/>
</dbReference>
<dbReference type="Pfam" id="PF07654">
    <property type="entry name" value="C1-set"/>
    <property type="match status" value="1"/>
</dbReference>
<dbReference type="Pfam" id="PF00129">
    <property type="entry name" value="MHC_I"/>
    <property type="match status" value="1"/>
</dbReference>
<dbReference type="Pfam" id="PF06623">
    <property type="entry name" value="MHC_I_C"/>
    <property type="match status" value="1"/>
</dbReference>
<dbReference type="PRINTS" id="PR01638">
    <property type="entry name" value="MHCCLASSI"/>
</dbReference>
<dbReference type="SMART" id="SM00407">
    <property type="entry name" value="IGc1"/>
    <property type="match status" value="1"/>
</dbReference>
<dbReference type="SUPFAM" id="SSF48726">
    <property type="entry name" value="Immunoglobulin"/>
    <property type="match status" value="1"/>
</dbReference>
<dbReference type="SUPFAM" id="SSF54452">
    <property type="entry name" value="MHC antigen-recognition domain"/>
    <property type="match status" value="1"/>
</dbReference>
<dbReference type="PROSITE" id="PS50835">
    <property type="entry name" value="IG_LIKE"/>
    <property type="match status" value="1"/>
</dbReference>
<dbReference type="PROSITE" id="PS00290">
    <property type="entry name" value="IG_MHC"/>
    <property type="match status" value="1"/>
</dbReference>
<comment type="function">
    <text>Involved in the presentation of foreign antigens to the immune system.</text>
</comment>
<comment type="subunit">
    <text>Heterodimer of an alpha chain and a beta chain (beta-2-microglobulin).</text>
</comment>
<comment type="subcellular location">
    <subcellularLocation>
        <location>Membrane</location>
        <topology>Single-pass type I membrane protein</topology>
    </subcellularLocation>
</comment>
<comment type="similarity">
    <text evidence="7">Belongs to the MHC class I family.</text>
</comment>
<protein>
    <recommendedName>
        <fullName>Patr class I histocompatibility antigen, A-108 alpha chain</fullName>
    </recommendedName>
    <alternativeName>
        <fullName>ChLa class I histocompatibility antigen, A-108 alpha chain</fullName>
    </alternativeName>
    <alternativeName>
        <fullName>MHC class I antigen Patr-A*0301</fullName>
    </alternativeName>
</protein>
<sequence length="365" mass="40823">MAVMPPRTLLLLLSGALALTQTWAGSHSMRYFYTSVSRPGRGEPRFIAVGYVDDTQFVRFDSDAASQRMEPRAPWIEQEGPEYWDQETRNMKASAQTDRVDLGTLRGYYNQSEDGSHTIQIMYGCDVGSDGRFLRGYRQDAYDGKDYIALNEDLRSWTAAAMAAQITKRKWEAAHAAEQLRAYLEGRCVEWLRRYLENGKETLQRTDPPKTHMTHHPISDHEATLRCWALGFYPAVITLTWQRDGEDQTQDTELVETRPAGDGTFQKWAAVVVPSGEEQRYTCHVQHEGLPKPLTLRWEPSSQPTIPIVGIIAGLVLLGAVITGAVVAAVMWRRKSSDRKGGSYTQAASSDSAQGSDVSLTACKV</sequence>
<gene>
    <name type="primary">Patr-A</name>
</gene>
<organism>
    <name type="scientific">Pan troglodytes</name>
    <name type="common">Chimpanzee</name>
    <dbReference type="NCBI Taxonomy" id="9598"/>
    <lineage>
        <taxon>Eukaryota</taxon>
        <taxon>Metazoa</taxon>
        <taxon>Chordata</taxon>
        <taxon>Craniata</taxon>
        <taxon>Vertebrata</taxon>
        <taxon>Euteleostomi</taxon>
        <taxon>Mammalia</taxon>
        <taxon>Eutheria</taxon>
        <taxon>Euarchontoglires</taxon>
        <taxon>Primates</taxon>
        <taxon>Haplorrhini</taxon>
        <taxon>Catarrhini</taxon>
        <taxon>Hominidae</taxon>
        <taxon>Pan</taxon>
    </lineage>
</organism>